<reference key="1">
    <citation type="journal article" date="1998" name="Nature">
        <title>Deciphering the biology of Mycobacterium tuberculosis from the complete genome sequence.</title>
        <authorList>
            <person name="Cole S.T."/>
            <person name="Brosch R."/>
            <person name="Parkhill J."/>
            <person name="Garnier T."/>
            <person name="Churcher C.M."/>
            <person name="Harris D.E."/>
            <person name="Gordon S.V."/>
            <person name="Eiglmeier K."/>
            <person name="Gas S."/>
            <person name="Barry C.E. III"/>
            <person name="Tekaia F."/>
            <person name="Badcock K."/>
            <person name="Basham D."/>
            <person name="Brown D."/>
            <person name="Chillingworth T."/>
            <person name="Connor R."/>
            <person name="Davies R.M."/>
            <person name="Devlin K."/>
            <person name="Feltwell T."/>
            <person name="Gentles S."/>
            <person name="Hamlin N."/>
            <person name="Holroyd S."/>
            <person name="Hornsby T."/>
            <person name="Jagels K."/>
            <person name="Krogh A."/>
            <person name="McLean J."/>
            <person name="Moule S."/>
            <person name="Murphy L.D."/>
            <person name="Oliver S."/>
            <person name="Osborne J."/>
            <person name="Quail M.A."/>
            <person name="Rajandream M.A."/>
            <person name="Rogers J."/>
            <person name="Rutter S."/>
            <person name="Seeger K."/>
            <person name="Skelton S."/>
            <person name="Squares S."/>
            <person name="Squares R."/>
            <person name="Sulston J.E."/>
            <person name="Taylor K."/>
            <person name="Whitehead S."/>
            <person name="Barrell B.G."/>
        </authorList>
    </citation>
    <scope>NUCLEOTIDE SEQUENCE [LARGE SCALE GENOMIC DNA]</scope>
    <source>
        <strain>ATCC 25618 / H37Rv</strain>
    </source>
</reference>
<reference key="2">
    <citation type="journal article" date="2010" name="PLoS ONE">
        <title>Prokaryotic ubiquitin-like protein (Pup) proteome of Mycobacterium tuberculosis.</title>
        <authorList>
            <person name="Festa R.A."/>
            <person name="McAllister F."/>
            <person name="Pearce M.J."/>
            <person name="Mintseris J."/>
            <person name="Burns K.E."/>
            <person name="Gygi S.P."/>
            <person name="Darwin K.H."/>
        </authorList>
    </citation>
    <scope>PUPYLATION AT LYS-354</scope>
    <scope>IDENTIFICATION BY MASS SPECTROMETRY</scope>
    <source>
        <strain>ATCC 25618 / H37Rv</strain>
    </source>
</reference>
<reference key="3">
    <citation type="journal article" date="2011" name="Mol. Cell. Proteomics">
        <title>Proteogenomic analysis of Mycobacterium tuberculosis by high resolution mass spectrometry.</title>
        <authorList>
            <person name="Kelkar D.S."/>
            <person name="Kumar D."/>
            <person name="Kumar P."/>
            <person name="Balakrishnan L."/>
            <person name="Muthusamy B."/>
            <person name="Yadav A.K."/>
            <person name="Shrivastava P."/>
            <person name="Marimuthu A."/>
            <person name="Anand S."/>
            <person name="Sundaram H."/>
            <person name="Kingsbury R."/>
            <person name="Harsha H.C."/>
            <person name="Nair B."/>
            <person name="Prasad T.S."/>
            <person name="Chauhan D.S."/>
            <person name="Katoch K."/>
            <person name="Katoch V.M."/>
            <person name="Kumar P."/>
            <person name="Chaerkady R."/>
            <person name="Ramachandran S."/>
            <person name="Dash D."/>
            <person name="Pandey A."/>
        </authorList>
    </citation>
    <scope>IDENTIFICATION BY MASS SPECTROMETRY [LARGE SCALE ANALYSIS]</scope>
    <source>
        <strain>ATCC 25618 / H37Rv</strain>
    </source>
</reference>
<accession>P9WIT1</accession>
<accession>L0TBU2</accession>
<accession>Q50685</accession>
<accession>Q7D7C5</accession>
<gene>
    <name type="ordered locus">Rv2280</name>
</gene>
<dbReference type="EC" id="1.-.-.-"/>
<dbReference type="EMBL" id="AL123456">
    <property type="protein sequence ID" value="CCP45062.1"/>
    <property type="molecule type" value="Genomic_DNA"/>
</dbReference>
<dbReference type="PIR" id="D70731">
    <property type="entry name" value="D70731"/>
</dbReference>
<dbReference type="RefSeq" id="WP_003411690.1">
    <property type="nucleotide sequence ID" value="NZ_NVQJ01000012.1"/>
</dbReference>
<dbReference type="SMR" id="P9WIT1"/>
<dbReference type="FunCoup" id="P9WIT1">
    <property type="interactions" value="61"/>
</dbReference>
<dbReference type="IntAct" id="P9WIT1">
    <property type="interactions" value="16"/>
</dbReference>
<dbReference type="MINT" id="P9WIT1"/>
<dbReference type="STRING" id="83332.Rv2280"/>
<dbReference type="PaxDb" id="83332-Rv2280"/>
<dbReference type="KEGG" id="mtv:RVBD_2280"/>
<dbReference type="TubercuList" id="Rv2280"/>
<dbReference type="eggNOG" id="COG0277">
    <property type="taxonomic scope" value="Bacteria"/>
</dbReference>
<dbReference type="InParanoid" id="P9WIT1"/>
<dbReference type="PhylomeDB" id="P9WIT1"/>
<dbReference type="Proteomes" id="UP000001584">
    <property type="component" value="Chromosome"/>
</dbReference>
<dbReference type="GO" id="GO:0009274">
    <property type="term" value="C:peptidoglycan-based cell wall"/>
    <property type="evidence" value="ECO:0007005"/>
    <property type="project" value="MTBBASE"/>
</dbReference>
<dbReference type="GO" id="GO:0005886">
    <property type="term" value="C:plasma membrane"/>
    <property type="evidence" value="ECO:0007005"/>
    <property type="project" value="MTBBASE"/>
</dbReference>
<dbReference type="GO" id="GO:0071949">
    <property type="term" value="F:FAD binding"/>
    <property type="evidence" value="ECO:0007669"/>
    <property type="project" value="InterPro"/>
</dbReference>
<dbReference type="GO" id="GO:0016491">
    <property type="term" value="F:oxidoreductase activity"/>
    <property type="evidence" value="ECO:0007669"/>
    <property type="project" value="UniProtKB-KW"/>
</dbReference>
<dbReference type="FunFam" id="1.10.45.10:FF:000001">
    <property type="entry name" value="D-lactate dehydrogenase mitochondrial"/>
    <property type="match status" value="1"/>
</dbReference>
<dbReference type="FunFam" id="3.30.70.2740:FF:000008">
    <property type="entry name" value="Probable dehydrogenase"/>
    <property type="match status" value="1"/>
</dbReference>
<dbReference type="Gene3D" id="3.30.465.10">
    <property type="match status" value="1"/>
</dbReference>
<dbReference type="Gene3D" id="3.30.70.2740">
    <property type="match status" value="1"/>
</dbReference>
<dbReference type="Gene3D" id="1.10.45.10">
    <property type="entry name" value="Vanillyl-alcohol Oxidase, Chain A, domain 4"/>
    <property type="match status" value="1"/>
</dbReference>
<dbReference type="InterPro" id="IPR004113">
    <property type="entry name" value="FAD-bd_oxidored_4_C"/>
</dbReference>
<dbReference type="InterPro" id="IPR016166">
    <property type="entry name" value="FAD-bd_PCMH"/>
</dbReference>
<dbReference type="InterPro" id="IPR036318">
    <property type="entry name" value="FAD-bd_PCMH-like_sf"/>
</dbReference>
<dbReference type="InterPro" id="IPR016169">
    <property type="entry name" value="FAD-bd_PCMH_sub2"/>
</dbReference>
<dbReference type="InterPro" id="IPR016164">
    <property type="entry name" value="FAD-linked_Oxase-like_C"/>
</dbReference>
<dbReference type="InterPro" id="IPR051914">
    <property type="entry name" value="FAD-linked_OxidoTrans_Type4"/>
</dbReference>
<dbReference type="InterPro" id="IPR006094">
    <property type="entry name" value="Oxid_FAD_bind_N"/>
</dbReference>
<dbReference type="InterPro" id="IPR016171">
    <property type="entry name" value="Vanillyl_alc_oxidase_C-sub2"/>
</dbReference>
<dbReference type="PANTHER" id="PTHR42934">
    <property type="entry name" value="GLYCOLATE OXIDASE SUBUNIT GLCD"/>
    <property type="match status" value="1"/>
</dbReference>
<dbReference type="PANTHER" id="PTHR42934:SF2">
    <property type="entry name" value="GLYCOLATE OXIDASE SUBUNIT GLCD"/>
    <property type="match status" value="1"/>
</dbReference>
<dbReference type="Pfam" id="PF02913">
    <property type="entry name" value="FAD-oxidase_C"/>
    <property type="match status" value="1"/>
</dbReference>
<dbReference type="Pfam" id="PF01565">
    <property type="entry name" value="FAD_binding_4"/>
    <property type="match status" value="1"/>
</dbReference>
<dbReference type="SUPFAM" id="SSF56176">
    <property type="entry name" value="FAD-binding/transporter-associated domain-like"/>
    <property type="match status" value="1"/>
</dbReference>
<dbReference type="SUPFAM" id="SSF55103">
    <property type="entry name" value="FAD-linked oxidases, C-terminal domain"/>
    <property type="match status" value="1"/>
</dbReference>
<dbReference type="PROSITE" id="PS51387">
    <property type="entry name" value="FAD_PCMH"/>
    <property type="match status" value="1"/>
</dbReference>
<evidence type="ECO:0000250" key="1"/>
<evidence type="ECO:0000255" key="2">
    <source>
        <dbReference type="PROSITE-ProRule" id="PRU00718"/>
    </source>
</evidence>
<evidence type="ECO:0000256" key="3">
    <source>
        <dbReference type="SAM" id="MobiDB-lite"/>
    </source>
</evidence>
<evidence type="ECO:0000269" key="4">
    <source>
    </source>
</evidence>
<evidence type="ECO:0000305" key="5"/>
<keyword id="KW-0274">FAD</keyword>
<keyword id="KW-0285">Flavoprotein</keyword>
<keyword id="KW-1017">Isopeptide bond</keyword>
<keyword id="KW-0560">Oxidoreductase</keyword>
<keyword id="KW-1185">Reference proteome</keyword>
<keyword id="KW-0832">Ubl conjugation</keyword>
<organism>
    <name type="scientific">Mycobacterium tuberculosis (strain ATCC 25618 / H37Rv)</name>
    <dbReference type="NCBI Taxonomy" id="83332"/>
    <lineage>
        <taxon>Bacteria</taxon>
        <taxon>Bacillati</taxon>
        <taxon>Actinomycetota</taxon>
        <taxon>Actinomycetes</taxon>
        <taxon>Mycobacteriales</taxon>
        <taxon>Mycobacteriaceae</taxon>
        <taxon>Mycobacterium</taxon>
        <taxon>Mycobacterium tuberculosis complex</taxon>
    </lineage>
</organism>
<comment type="cofactor">
    <cofactor evidence="1">
        <name>FAD</name>
        <dbReference type="ChEBI" id="CHEBI:57692"/>
    </cofactor>
</comment>
<comment type="interaction">
    <interactant intactId="EBI-25767539">
        <id>P9WIT1</id>
    </interactant>
    <interactant intactId="EBI-11566520">
        <id>Q80XK6</id>
        <label>Atg2b</label>
    </interactant>
    <organismsDiffer>true</organismsDiffer>
    <experiments>3</experiments>
</comment>
<comment type="similarity">
    <text evidence="5">Belongs to the oxygen-dependent FAD-linked oxidoreductase family.</text>
</comment>
<proteinExistence type="evidence at protein level"/>
<name>Y2280_MYCTU</name>
<sequence>MSEMTARFSEIVGNANLLTGDAIPEDYAHDEELTGPPQKPAYAAKPATPEEVAQLLKAASENGVPVTARGSGCGLSGAARPVEGGLLISFDRMNKVLEVDTANQVAVVQPGVALTDLDAATADTGLRYTVYPGELSSSVGGNVGTNAGGMRAVKYGVARHNVLGLQAVLPTGEIIRTGGRMAKVSTGYDLTQLIIGSEGTLALVTEVIVKLHPRLDHNASVLAPFADFDQVMAAVPKILASGLAPDILEYIDNTSMAALISTQNLELGIPDQIRDSCEAYLLVALENRIADRLFEDIQTVGEMLMELGAVDAYVLEGGSARKLIEAREKAFWAAKALGADDIIDTVVPRASMPKFLSTARGLAAAADGAAVGCGHAGDGNVHMAIACKDPEKKKKLMTDIFALAMELGGAISGEHGVGRAKTGYFLELEDPVKISLMRRIKQSFDPAGILNPGVVFGDT</sequence>
<feature type="chain" id="PRO_0000395888" description="Uncharacterized FAD-linked oxidoreductase Rv2280">
    <location>
        <begin position="1"/>
        <end position="459"/>
    </location>
</feature>
<feature type="domain" description="FAD-binding PCMH-type" evidence="2">
    <location>
        <begin position="35"/>
        <end position="214"/>
    </location>
</feature>
<feature type="region of interest" description="Disordered" evidence="3">
    <location>
        <begin position="28"/>
        <end position="47"/>
    </location>
</feature>
<feature type="cross-link" description="Isoglutamyl lysine isopeptide (Lys-Gln) (interchain with Q-Cter in protein Pup)" evidence="4">
    <location>
        <position position="354"/>
    </location>
</feature>
<protein>
    <recommendedName>
        <fullName>Uncharacterized FAD-linked oxidoreductase Rv2280</fullName>
        <ecNumber>1.-.-.-</ecNumber>
    </recommendedName>
</protein>